<organism>
    <name type="scientific">Homo sapiens</name>
    <name type="common">Human</name>
    <dbReference type="NCBI Taxonomy" id="9606"/>
    <lineage>
        <taxon>Eukaryota</taxon>
        <taxon>Metazoa</taxon>
        <taxon>Chordata</taxon>
        <taxon>Craniata</taxon>
        <taxon>Vertebrata</taxon>
        <taxon>Euteleostomi</taxon>
        <taxon>Mammalia</taxon>
        <taxon>Eutheria</taxon>
        <taxon>Euarchontoglires</taxon>
        <taxon>Primates</taxon>
        <taxon>Haplorrhini</taxon>
        <taxon>Catarrhini</taxon>
        <taxon>Hominidae</taxon>
        <taxon>Homo</taxon>
    </lineage>
</organism>
<accession>Q5DID0</accession>
<accession>C9JCE6</accession>
<accession>Q5DIC9</accession>
<accession>Q6LA40</accession>
<accession>Q6LA41</accession>
<accession>Q8N216</accession>
<comment type="subcellular location">
    <subcellularLocation>
        <location evidence="11">Cell membrane</location>
        <topology evidence="11">Single-pass type I membrane protein</topology>
    </subcellularLocation>
</comment>
<comment type="subcellular location">
    <molecule>Isoform 3</molecule>
    <subcellularLocation>
        <location>Cytoplasm</location>
    </subcellularLocation>
</comment>
<comment type="subcellular location">
    <molecule>Isoform 4</molecule>
    <subcellularLocation>
        <location>Cytoplasm</location>
    </subcellularLocation>
</comment>
<comment type="alternative products">
    <event type="alternative splicing"/>
    <isoform>
        <id>Q5DID0-1</id>
        <name>1</name>
        <sequence type="displayed"/>
    </isoform>
    <isoform>
        <id>Q5DID0-2</id>
        <name>2</name>
        <sequence type="described" ref="VSP_017659"/>
    </isoform>
    <isoform>
        <id>Q5DID0-3</id>
        <name>3</name>
        <name>UMOLD1S</name>
        <sequence type="described" ref="VSP_017658"/>
    </isoform>
    <isoform>
        <id>Q5DID0-4</id>
        <name>4</name>
        <name>UMOLD1L</name>
        <sequence type="described" ref="VSP_017658 VSP_017659"/>
    </isoform>
    <text>Additional isoforms seem to exist expressed specifically in testis.</text>
</comment>
<comment type="tissue specificity">
    <text evidence="11">Isoform 4 is expressed at low level in kidney, testis and fetal thymus. Isoform 3 is expressed at low level in prostate, testis and fetal thymus.</text>
</comment>
<comment type="sequence caution" evidence="15">
    <conflict type="erroneous initiation">
        <sequence resource="EMBL-CDS" id="BAC04211"/>
    </conflict>
</comment>
<proteinExistence type="evidence at protein level"/>
<reference key="1">
    <citation type="journal article" date="2004" name="Biochem. Biophys. Res. Commun.">
        <title>Initial characterization of an uromodulin-like 1 gene on human chromosome 21q22.3.</title>
        <authorList>
            <person name="Shibuya K."/>
            <person name="Nagamine K."/>
            <person name="Okui M."/>
            <person name="Ohsawa Y."/>
            <person name="Asakawa S."/>
            <person name="Minoshima S."/>
            <person name="Hase T."/>
            <person name="Kudoh J."/>
            <person name="Shimizu N."/>
        </authorList>
    </citation>
    <scope>NUCLEOTIDE SEQUENCE [MRNA] (ISOFORMS 3 AND 4)</scope>
    <scope>SUBCELLULAR LOCATION</scope>
    <scope>TISSUE SPECIFICITY</scope>
    <scope>ALTERNATIVE SPLICING</scope>
    <scope>VARIANTS THR-559; THR-639 AND HIS-1309</scope>
    <source>
        <tissue>Fetal kidney</tissue>
        <tissue>Fetal thymus</tissue>
    </source>
</reference>
<reference key="2">
    <citation type="journal article" date="2005" name="Eur. J. Neurosci.">
        <title>UMODL1/olfactorin is an extracellular membrane-bound molecule with a restricted spatial expression in olfactory and vomeronasal neurons.</title>
        <authorList>
            <person name="Di Schiavi E."/>
            <person name="Riano E."/>
            <person name="Heye B."/>
            <person name="Bazzicalupo P."/>
            <person name="Rugarli E.I."/>
        </authorList>
    </citation>
    <scope>NUCLEOTIDE SEQUENCE [MRNA] (ISOFORMS 1 AND 2)</scope>
    <scope>VARIANTS ILE-173; HIS-274; ASP-274; GLN-447; THR-559; THR-639; PRO-698; ILE-850; ASN-1027; SER-1068; LYS-1115; ASN-1208 AND HIS-1309</scope>
</reference>
<reference key="3">
    <citation type="journal article" date="2000" name="Nature">
        <title>The DNA sequence of human chromosome 21.</title>
        <authorList>
            <person name="Hattori M."/>
            <person name="Fujiyama A."/>
            <person name="Taylor T.D."/>
            <person name="Watanabe H."/>
            <person name="Yada T."/>
            <person name="Park H.-S."/>
            <person name="Toyoda A."/>
            <person name="Ishii K."/>
            <person name="Totoki Y."/>
            <person name="Choi D.-K."/>
            <person name="Groner Y."/>
            <person name="Soeda E."/>
            <person name="Ohki M."/>
            <person name="Takagi T."/>
            <person name="Sakaki Y."/>
            <person name="Taudien S."/>
            <person name="Blechschmidt K."/>
            <person name="Polley A."/>
            <person name="Menzel U."/>
            <person name="Delabar J."/>
            <person name="Kumpf K."/>
            <person name="Lehmann R."/>
            <person name="Patterson D."/>
            <person name="Reichwald K."/>
            <person name="Rump A."/>
            <person name="Schillhabel M."/>
            <person name="Schudy A."/>
            <person name="Zimmermann W."/>
            <person name="Rosenthal A."/>
            <person name="Kudoh J."/>
            <person name="Shibuya K."/>
            <person name="Kawasaki K."/>
            <person name="Asakawa S."/>
            <person name="Shintani A."/>
            <person name="Sasaki T."/>
            <person name="Nagamine K."/>
            <person name="Mitsuyama S."/>
            <person name="Antonarakis S.E."/>
            <person name="Minoshima S."/>
            <person name="Shimizu N."/>
            <person name="Nordsiek G."/>
            <person name="Hornischer K."/>
            <person name="Brandt P."/>
            <person name="Scharfe M."/>
            <person name="Schoen O."/>
            <person name="Desario A."/>
            <person name="Reichelt J."/>
            <person name="Kauer G."/>
            <person name="Bloecker H."/>
            <person name="Ramser J."/>
            <person name="Beck A."/>
            <person name="Klages S."/>
            <person name="Hennig S."/>
            <person name="Riesselmann L."/>
            <person name="Dagand E."/>
            <person name="Wehrmeyer S."/>
            <person name="Borzym K."/>
            <person name="Gardiner K."/>
            <person name="Nizetic D."/>
            <person name="Francis F."/>
            <person name="Lehrach H."/>
            <person name="Reinhardt R."/>
            <person name="Yaspo M.-L."/>
        </authorList>
    </citation>
    <scope>NUCLEOTIDE SEQUENCE [LARGE SCALE GENOMIC DNA]</scope>
    <source>
        <tissue>Testis</tissue>
    </source>
</reference>
<reference key="4">
    <citation type="journal article" date="2004" name="Nat. Genet.">
        <title>Complete sequencing and characterization of 21,243 full-length human cDNAs.</title>
        <authorList>
            <person name="Ota T."/>
            <person name="Suzuki Y."/>
            <person name="Nishikawa T."/>
            <person name="Otsuki T."/>
            <person name="Sugiyama T."/>
            <person name="Irie R."/>
            <person name="Wakamatsu A."/>
            <person name="Hayashi K."/>
            <person name="Sato H."/>
            <person name="Nagai K."/>
            <person name="Kimura K."/>
            <person name="Makita H."/>
            <person name="Sekine M."/>
            <person name="Obayashi M."/>
            <person name="Nishi T."/>
            <person name="Shibahara T."/>
            <person name="Tanaka T."/>
            <person name="Ishii S."/>
            <person name="Yamamoto J."/>
            <person name="Saito K."/>
            <person name="Kawai Y."/>
            <person name="Isono Y."/>
            <person name="Nakamura Y."/>
            <person name="Nagahari K."/>
            <person name="Murakami K."/>
            <person name="Yasuda T."/>
            <person name="Iwayanagi T."/>
            <person name="Wagatsuma M."/>
            <person name="Shiratori A."/>
            <person name="Sudo H."/>
            <person name="Hosoiri T."/>
            <person name="Kaku Y."/>
            <person name="Kodaira H."/>
            <person name="Kondo H."/>
            <person name="Sugawara M."/>
            <person name="Takahashi M."/>
            <person name="Kanda K."/>
            <person name="Yokoi T."/>
            <person name="Furuya T."/>
            <person name="Kikkawa E."/>
            <person name="Omura Y."/>
            <person name="Abe K."/>
            <person name="Kamihara K."/>
            <person name="Katsuta N."/>
            <person name="Sato K."/>
            <person name="Tanikawa M."/>
            <person name="Yamazaki M."/>
            <person name="Ninomiya K."/>
            <person name="Ishibashi T."/>
            <person name="Yamashita H."/>
            <person name="Murakawa K."/>
            <person name="Fujimori K."/>
            <person name="Tanai H."/>
            <person name="Kimata M."/>
            <person name="Watanabe M."/>
            <person name="Hiraoka S."/>
            <person name="Chiba Y."/>
            <person name="Ishida S."/>
            <person name="Ono Y."/>
            <person name="Takiguchi S."/>
            <person name="Watanabe S."/>
            <person name="Yosida M."/>
            <person name="Hotuta T."/>
            <person name="Kusano J."/>
            <person name="Kanehori K."/>
            <person name="Takahashi-Fujii A."/>
            <person name="Hara H."/>
            <person name="Tanase T.-O."/>
            <person name="Nomura Y."/>
            <person name="Togiya S."/>
            <person name="Komai F."/>
            <person name="Hara R."/>
            <person name="Takeuchi K."/>
            <person name="Arita M."/>
            <person name="Imose N."/>
            <person name="Musashino K."/>
            <person name="Yuuki H."/>
            <person name="Oshima A."/>
            <person name="Sasaki N."/>
            <person name="Aotsuka S."/>
            <person name="Yoshikawa Y."/>
            <person name="Matsunawa H."/>
            <person name="Ichihara T."/>
            <person name="Shiohata N."/>
            <person name="Sano S."/>
            <person name="Moriya S."/>
            <person name="Momiyama H."/>
            <person name="Satoh N."/>
            <person name="Takami S."/>
            <person name="Terashima Y."/>
            <person name="Suzuki O."/>
            <person name="Nakagawa S."/>
            <person name="Senoh A."/>
            <person name="Mizoguchi H."/>
            <person name="Goto Y."/>
            <person name="Shimizu F."/>
            <person name="Wakebe H."/>
            <person name="Hishigaki H."/>
            <person name="Watanabe T."/>
            <person name="Sugiyama A."/>
            <person name="Takemoto M."/>
            <person name="Kawakami B."/>
            <person name="Yamazaki M."/>
            <person name="Watanabe K."/>
            <person name="Kumagai A."/>
            <person name="Itakura S."/>
            <person name="Fukuzumi Y."/>
            <person name="Fujimori Y."/>
            <person name="Komiyama M."/>
            <person name="Tashiro H."/>
            <person name="Tanigami A."/>
            <person name="Fujiwara T."/>
            <person name="Ono T."/>
            <person name="Yamada K."/>
            <person name="Fujii Y."/>
            <person name="Ozaki K."/>
            <person name="Hirao M."/>
            <person name="Ohmori Y."/>
            <person name="Kawabata A."/>
            <person name="Hikiji T."/>
            <person name="Kobatake N."/>
            <person name="Inagaki H."/>
            <person name="Ikema Y."/>
            <person name="Okamoto S."/>
            <person name="Okitani R."/>
            <person name="Kawakami T."/>
            <person name="Noguchi S."/>
            <person name="Itoh T."/>
            <person name="Shigeta K."/>
            <person name="Senba T."/>
            <person name="Matsumura K."/>
            <person name="Nakajima Y."/>
            <person name="Mizuno T."/>
            <person name="Morinaga M."/>
            <person name="Sasaki M."/>
            <person name="Togashi T."/>
            <person name="Oyama M."/>
            <person name="Hata H."/>
            <person name="Watanabe M."/>
            <person name="Komatsu T."/>
            <person name="Mizushima-Sugano J."/>
            <person name="Satoh T."/>
            <person name="Shirai Y."/>
            <person name="Takahashi Y."/>
            <person name="Nakagawa K."/>
            <person name="Okumura K."/>
            <person name="Nagase T."/>
            <person name="Nomura N."/>
            <person name="Kikuchi H."/>
            <person name="Masuho Y."/>
            <person name="Yamashita R."/>
            <person name="Nakai K."/>
            <person name="Yada T."/>
            <person name="Nakamura Y."/>
            <person name="Ohara O."/>
            <person name="Isogai T."/>
            <person name="Sugano S."/>
        </authorList>
    </citation>
    <scope>NUCLEOTIDE SEQUENCE [LARGE SCALE MRNA] OF 921-1318</scope>
    <scope>VARIANT HIS-1309</scope>
    <source>
        <tissue>Thymus</tissue>
    </source>
</reference>
<feature type="signal peptide" evidence="2">
    <location>
        <begin position="1"/>
        <end position="21"/>
    </location>
</feature>
<feature type="chain" id="PRO_0000228127" description="Uromodulin-like 1">
    <location>
        <begin position="22"/>
        <end position="1318"/>
    </location>
</feature>
<feature type="topological domain" description="Extracellular" evidence="2">
    <location>
        <begin position="22"/>
        <end position="1272"/>
    </location>
</feature>
<feature type="transmembrane region" description="Helical" evidence="2">
    <location>
        <begin position="1273"/>
        <end position="1293"/>
    </location>
</feature>
<feature type="topological domain" description="Cytoplasmic" evidence="2">
    <location>
        <begin position="1294"/>
        <end position="1318"/>
    </location>
</feature>
<feature type="domain" description="EMI" evidence="7">
    <location>
        <begin position="33"/>
        <end position="106"/>
    </location>
</feature>
<feature type="domain" description="WAP" evidence="8">
    <location>
        <begin position="114"/>
        <end position="158"/>
    </location>
</feature>
<feature type="domain" description="EGF-like 1; calcium-binding" evidence="3">
    <location>
        <begin position="264"/>
        <end position="313"/>
    </location>
</feature>
<feature type="domain" description="Fibronectin type-III 1" evidence="5">
    <location>
        <begin position="314"/>
        <end position="398"/>
    </location>
</feature>
<feature type="domain" description="SEA 1" evidence="4">
    <location>
        <begin position="396"/>
        <end position="510"/>
    </location>
</feature>
<feature type="domain" description="EGF-like 2; calcium-binding" evidence="3">
    <location>
        <begin position="507"/>
        <end position="552"/>
    </location>
</feature>
<feature type="domain" description="Fibronectin type-III 2" evidence="5">
    <location>
        <begin position="702"/>
        <end position="791"/>
    </location>
</feature>
<feature type="domain" description="SEA 2" evidence="4">
    <location>
        <begin position="788"/>
        <end position="900"/>
    </location>
</feature>
<feature type="domain" description="EGF-like 3; calcium-binding" evidence="3">
    <location>
        <begin position="897"/>
        <end position="938"/>
    </location>
</feature>
<feature type="domain" description="ZP" evidence="6">
    <location>
        <begin position="992"/>
        <end position="1235"/>
    </location>
</feature>
<feature type="region of interest" description="Disordered" evidence="9">
    <location>
        <begin position="593"/>
        <end position="655"/>
    </location>
</feature>
<feature type="region of interest" description="Disordered" evidence="9">
    <location>
        <begin position="938"/>
        <end position="957"/>
    </location>
</feature>
<feature type="glycosylation site" description="N-linked (GlcNAc...) asparagine" evidence="2">
    <location>
        <position position="89"/>
    </location>
</feature>
<feature type="glycosylation site" description="N-linked (GlcNAc...) asparagine" evidence="2">
    <location>
        <position position="109"/>
    </location>
</feature>
<feature type="glycosylation site" description="N-linked (GlcNAc...) asparagine" evidence="2">
    <location>
        <position position="172"/>
    </location>
</feature>
<feature type="glycosylation site" description="N-linked (GlcNAc...) asparagine" evidence="2">
    <location>
        <position position="322"/>
    </location>
</feature>
<feature type="glycosylation site" description="N-linked (GlcNAc...) asparagine" evidence="2">
    <location>
        <position position="335"/>
    </location>
</feature>
<feature type="glycosylation site" description="N-linked (GlcNAc...) asparagine" evidence="2">
    <location>
        <position position="417"/>
    </location>
</feature>
<feature type="glycosylation site" description="N-linked (GlcNAc...) asparagine" evidence="2">
    <location>
        <position position="585"/>
    </location>
</feature>
<feature type="glycosylation site" description="N-linked (GlcNAc...) asparagine" evidence="2">
    <location>
        <position position="713"/>
    </location>
</feature>
<feature type="glycosylation site" description="N-linked (GlcNAc...) asparagine" evidence="2">
    <location>
        <position position="984"/>
    </location>
</feature>
<feature type="glycosylation site" description="N-linked (GlcNAc...) asparagine" evidence="2">
    <location>
        <position position="1050"/>
    </location>
</feature>
<feature type="disulfide bond" evidence="2">
    <location>
        <begin position="37"/>
        <end position="94"/>
    </location>
</feature>
<feature type="disulfide bond" evidence="2">
    <location>
        <begin position="61"/>
        <end position="70"/>
    </location>
</feature>
<feature type="disulfide bond" evidence="2">
    <location>
        <begin position="93"/>
        <end position="104"/>
    </location>
</feature>
<feature type="disulfide bond" evidence="1">
    <location>
        <begin position="511"/>
        <end position="525"/>
    </location>
</feature>
<feature type="disulfide bond" evidence="1">
    <location>
        <begin position="519"/>
        <end position="534"/>
    </location>
</feature>
<feature type="disulfide bond" evidence="1">
    <location>
        <begin position="536"/>
        <end position="551"/>
    </location>
</feature>
<feature type="disulfide bond" evidence="1">
    <location>
        <begin position="901"/>
        <end position="914"/>
    </location>
</feature>
<feature type="disulfide bond" evidence="1">
    <location>
        <begin position="908"/>
        <end position="923"/>
    </location>
</feature>
<feature type="disulfide bond" evidence="1">
    <location>
        <begin position="1157"/>
        <end position="1215"/>
    </location>
</feature>
<feature type="splice variant" id="VSP_017658" description="In isoform 3 and isoform 4." evidence="13">
    <location>
        <begin position="1"/>
        <end position="72"/>
    </location>
</feature>
<feature type="splice variant" id="VSP_017659" description="In isoform 2 and isoform 4." evidence="13 14">
    <original>E</original>
    <variation>EVPSTAPGLGMDQGSPSQVNPSQGSPSQGSLRQESTSQASPSQRSTSQGSPSQVNPSQRSTSHANSSQGSPSQGSPSQESPSQGSTSQASPSHRNTIGVIGTTSSPKATGSTHSFPPGATDGPLALPGQ</variation>
    <location>
        <position position="633"/>
    </location>
</feature>
<feature type="sequence variant" id="VAR_025668" description="In dbSNP:rs73371577." evidence="12">
    <original>V</original>
    <variation>I</variation>
    <location>
        <position position="173"/>
    </location>
</feature>
<feature type="sequence variant" id="VAR_025669" description="In dbSNP:rs17114359." evidence="12">
    <original>N</original>
    <variation>D</variation>
    <location>
        <position position="274"/>
    </location>
</feature>
<feature type="sequence variant" id="VAR_025670" description="In dbSNP:rs17114359." evidence="12">
    <original>N</original>
    <variation>H</variation>
    <location>
        <position position="274"/>
    </location>
</feature>
<feature type="sequence variant" id="VAR_025671" description="In dbSNP:rs146310440." evidence="12">
    <original>R</original>
    <variation>Q</variation>
    <location>
        <position position="447"/>
    </location>
</feature>
<feature type="sequence variant" id="VAR_025672" description="In dbSNP:rs220126." evidence="11 12">
    <original>M</original>
    <variation>T</variation>
    <location>
        <position position="559"/>
    </location>
</feature>
<feature type="sequence variant" id="VAR_025673" description="In dbSNP:rs220129." evidence="11 12">
    <original>I</original>
    <variation>T</variation>
    <location>
        <position position="639"/>
    </location>
</feature>
<feature type="sequence variant" id="VAR_025674" description="In dbSNP:rs220130." evidence="12">
    <original>T</original>
    <variation>P</variation>
    <location>
        <position position="698"/>
    </location>
</feature>
<feature type="sequence variant" id="VAR_025675" description="In dbSNP:rs220146." evidence="12">
    <original>V</original>
    <variation>I</variation>
    <location>
        <position position="850"/>
    </location>
</feature>
<feature type="sequence variant" id="VAR_025676" description="In dbSNP:rs150611312." evidence="12">
    <original>S</original>
    <variation>N</variation>
    <location>
        <position position="1027"/>
    </location>
</feature>
<feature type="sequence variant" id="VAR_025677" description="In dbSNP:rs111996953." evidence="12">
    <original>G</original>
    <variation>S</variation>
    <location>
        <position position="1068"/>
    </location>
</feature>
<feature type="sequence variant" id="VAR_025678" description="In dbSNP:rs80040922." evidence="12">
    <original>E</original>
    <variation>K</variation>
    <location>
        <position position="1115"/>
    </location>
</feature>
<feature type="sequence variant" id="VAR_025679" description="In dbSNP:rs220159." evidence="12">
    <original>D</original>
    <variation>N</variation>
    <location>
        <position position="1208"/>
    </location>
</feature>
<feature type="sequence variant" id="VAR_025680" description="In dbSNP:rs3819142." evidence="10 11 12">
    <original>N</original>
    <variation>H</variation>
    <location>
        <position position="1309"/>
    </location>
</feature>
<feature type="sequence variant" id="VAR_082944" description="In dbSNP:rs111772429." evidence="15">
    <original>D</original>
    <variation>E</variation>
    <location sequence="Q5DID0-2">
        <position position="644"/>
    </location>
</feature>
<feature type="sequence variant" id="VAR_082945" description="In dbSNP:rs220127." evidence="15">
    <original>R</original>
    <variation>G</variation>
    <location sequence="Q5DID0-2">
        <position position="691"/>
    </location>
</feature>
<feature type="sequence variant" id="VAR_082946" description="In dbSNP:rs220128." evidence="15">
    <original>T</original>
    <variation>P</variation>
    <location sequence="Q5DID0-2">
        <position position="741"/>
    </location>
</feature>
<keyword id="KW-0025">Alternative splicing</keyword>
<keyword id="KW-0106">Calcium</keyword>
<keyword id="KW-1003">Cell membrane</keyword>
<keyword id="KW-0963">Cytoplasm</keyword>
<keyword id="KW-1015">Disulfide bond</keyword>
<keyword id="KW-0245">EGF-like domain</keyword>
<keyword id="KW-0325">Glycoprotein</keyword>
<keyword id="KW-0472">Membrane</keyword>
<keyword id="KW-1267">Proteomics identification</keyword>
<keyword id="KW-1185">Reference proteome</keyword>
<keyword id="KW-0677">Repeat</keyword>
<keyword id="KW-0732">Signal</keyword>
<keyword id="KW-0812">Transmembrane</keyword>
<keyword id="KW-1133">Transmembrane helix</keyword>
<sequence>MLRTSGLALLALVSAVGPSQASGFTEKGLSLLGYQLCSHRVTHTVQKVEAVQTSYTSYVSCGGWIPWRRCPKMVYRTQYLVVEVPESRNVTDCCEGYEQLGLYCVLPLNQSGQFTSRPGACPAEGPEPSTSPCSLDIDCPGLEKCCPWSGGRYCMAPAPQAPERDPVGSWYNVTILVKMDFKELQQVDPRLLNHMRLLHSLVTSALQPMASTVHHLHSAPGNASTTVSRLLLGLPRPLPVADVSTLLGDIAKRVYEVISVQVQDVNECFYEELNACSGRELCANLEGSYWCVCHQEAPATSPRKLNLEWEDCPPVSDYVVLNVTSDSFQVSWRLNSTQNHTFHVRVYRGMELLRSARTQSQALAVAGLEAGVLYRVKTSYQGCGADVSTTLTIKTNAQVFEVTIKIVNHNLTEKLLNRSSVEYQDFSRQLLHEVESSFPPVVSDLYRSGKLRMQIVSLQAGSVVVRLKLTVQDPGFPMGISTLAPILQPLLASTVFQIDRQGTRVQDWDECVDSAEHDCSPAAWCINLEGSYTCQCRTTRDATPSRAGRACEGDLVSPMGGGLSAATGVTVPGLGTGTAALGLENFTLSPSPGYPQGTPAAGQAWTPEPSPRRGGSNVVGYDRNNTGKGVEQELQGNSIMEPPSWPSPTEDPTGHFLWHATRSTRETLLNPTWLRNEDSGPSGSVDLPLTSTLTALKTPACVPVSIGRIMVSNVTSTGFHLAWEADLAMDSTFQLTLTSMWSPAVVLETWNTSVTLSGLEPGVLHLVEIMAKACGKEGARAHLKVRTAARKLIGKVRIKNVRYSESFRNASSQEYRDFLELFFRMVRGSLPATMCQHMDAGGVRMEVVSVTNGSIVVEFHLLIIADVDVQEVSAAFLTAFQTVPLLEVIRGDTFIQDYDECERKEDDCVPGTSCRNTLGSFTCSCEGGAPDFPVEYSERPCEGDSPGNETWATSPERPLTTAGTKAAFVQGTSPTPQGLPQRLNLTGAVRVLCEIEKVVVAIQKRFLQQESIPESSLYLSHPSCNVSHSNGTHVLLEAGWSECGTLMQSNMTNTVVRTTLRNDLSQEGIIHHLKILSPIYCAFQNDLLTSSGFTLEWGVYTIIEDLHGAGNFVTEMQLFIGDSPIPQNYSVSASDDVRIEVGLYRQKSNLKVVLTECWATPSSNARDPITFSFINNSCPVPNTYTNVIENGNSNKAQFKLRIFSFINDSIVYLHCKLRVCMESPGATCKINCNNFRLLQNSETSATHQMSWGPLIRSEGEPPHAEAGLGAGYVVLIVVAIFVLVAGTATLLIVRYQRMNGRYNFKIQSNNFSYQVFYE</sequence>
<protein>
    <recommendedName>
        <fullName>Uromodulin-like 1</fullName>
    </recommendedName>
    <alternativeName>
        <fullName>Olfactorin</fullName>
    </alternativeName>
</protein>
<name>UROL1_HUMAN</name>
<evidence type="ECO:0000250" key="1"/>
<evidence type="ECO:0000255" key="2"/>
<evidence type="ECO:0000255" key="3">
    <source>
        <dbReference type="PROSITE-ProRule" id="PRU00076"/>
    </source>
</evidence>
<evidence type="ECO:0000255" key="4">
    <source>
        <dbReference type="PROSITE-ProRule" id="PRU00188"/>
    </source>
</evidence>
<evidence type="ECO:0000255" key="5">
    <source>
        <dbReference type="PROSITE-ProRule" id="PRU00316"/>
    </source>
</evidence>
<evidence type="ECO:0000255" key="6">
    <source>
        <dbReference type="PROSITE-ProRule" id="PRU00375"/>
    </source>
</evidence>
<evidence type="ECO:0000255" key="7">
    <source>
        <dbReference type="PROSITE-ProRule" id="PRU00384"/>
    </source>
</evidence>
<evidence type="ECO:0000255" key="8">
    <source>
        <dbReference type="PROSITE-ProRule" id="PRU00722"/>
    </source>
</evidence>
<evidence type="ECO:0000256" key="9">
    <source>
        <dbReference type="SAM" id="MobiDB-lite"/>
    </source>
</evidence>
<evidence type="ECO:0000269" key="10">
    <source>
    </source>
</evidence>
<evidence type="ECO:0000269" key="11">
    <source>
    </source>
</evidence>
<evidence type="ECO:0000269" key="12">
    <source>
    </source>
</evidence>
<evidence type="ECO:0000303" key="13">
    <source>
    </source>
</evidence>
<evidence type="ECO:0000303" key="14">
    <source>
    </source>
</evidence>
<evidence type="ECO:0000305" key="15"/>
<gene>
    <name type="primary">UMODL1</name>
</gene>
<dbReference type="EMBL" id="AB051810">
    <property type="protein sequence ID" value="BAD23798.1"/>
    <property type="molecule type" value="mRNA"/>
</dbReference>
<dbReference type="EMBL" id="AB051811">
    <property type="protein sequence ID" value="BAD23799.1"/>
    <property type="molecule type" value="mRNA"/>
</dbReference>
<dbReference type="EMBL" id="AY771619">
    <property type="protein sequence ID" value="AAX14814.1"/>
    <property type="molecule type" value="mRNA"/>
</dbReference>
<dbReference type="EMBL" id="AY771620">
    <property type="protein sequence ID" value="AAX14815.1"/>
    <property type="molecule type" value="mRNA"/>
</dbReference>
<dbReference type="EMBL" id="AP001620">
    <property type="status" value="NOT_ANNOTATED_CDS"/>
    <property type="molecule type" value="Genomic_DNA"/>
</dbReference>
<dbReference type="EMBL" id="AP001621">
    <property type="status" value="NOT_ANNOTATED_CDS"/>
    <property type="molecule type" value="Genomic_DNA"/>
</dbReference>
<dbReference type="EMBL" id="AP001622">
    <property type="status" value="NOT_ANNOTATED_CDS"/>
    <property type="molecule type" value="Genomic_DNA"/>
</dbReference>
<dbReference type="EMBL" id="AK093654">
    <property type="protein sequence ID" value="BAC04211.1"/>
    <property type="status" value="ALT_INIT"/>
    <property type="molecule type" value="mRNA"/>
</dbReference>
<dbReference type="CCDS" id="CCDS42935.1">
    <molecule id="Q5DID0-2"/>
</dbReference>
<dbReference type="CCDS" id="CCDS42936.1">
    <molecule id="Q5DID0-1"/>
</dbReference>
<dbReference type="CCDS" id="CCDS56214.1">
    <molecule id="Q5DID0-3"/>
</dbReference>
<dbReference type="CCDS" id="CCDS56215.1">
    <molecule id="Q5DID0-4"/>
</dbReference>
<dbReference type="RefSeq" id="NP_001004416.3">
    <molecule id="Q5DID0-1"/>
    <property type="nucleotide sequence ID" value="NM_001004416.3"/>
</dbReference>
<dbReference type="RefSeq" id="NP_001186456.2">
    <molecule id="Q5DID0-4"/>
    <property type="nucleotide sequence ID" value="NM_001199527.3"/>
</dbReference>
<dbReference type="RefSeq" id="NP_001186457.3">
    <molecule id="Q5DID0-3"/>
    <property type="nucleotide sequence ID" value="NM_001199528.4"/>
</dbReference>
<dbReference type="RefSeq" id="NP_775839.3">
    <molecule id="Q5DID0-2"/>
    <property type="nucleotide sequence ID" value="NM_173568.3"/>
</dbReference>
<dbReference type="RefSeq" id="XP_016883995.1">
    <property type="nucleotide sequence ID" value="XM_017028506.1"/>
</dbReference>
<dbReference type="SMR" id="Q5DID0"/>
<dbReference type="BioGRID" id="124592">
    <property type="interactions" value="16"/>
</dbReference>
<dbReference type="FunCoup" id="Q5DID0">
    <property type="interactions" value="71"/>
</dbReference>
<dbReference type="IntAct" id="Q5DID0">
    <property type="interactions" value="12"/>
</dbReference>
<dbReference type="STRING" id="9606.ENSP00000386126"/>
<dbReference type="GlyCosmos" id="Q5DID0">
    <property type="glycosylation" value="10 sites, No reported glycans"/>
</dbReference>
<dbReference type="GlyGen" id="Q5DID0">
    <property type="glycosylation" value="14 sites, 1 O-linked glycan (1 site)"/>
</dbReference>
<dbReference type="iPTMnet" id="Q5DID0"/>
<dbReference type="PhosphoSitePlus" id="Q5DID0"/>
<dbReference type="BioMuta" id="UMODL1"/>
<dbReference type="DMDM" id="90101849"/>
<dbReference type="MassIVE" id="Q5DID0"/>
<dbReference type="PaxDb" id="9606-ENSP00000386126"/>
<dbReference type="PeptideAtlas" id="Q5DID0"/>
<dbReference type="ProteomicsDB" id="62743">
    <molecule id="Q5DID0-1"/>
</dbReference>
<dbReference type="ProteomicsDB" id="62744">
    <molecule id="Q5DID0-2"/>
</dbReference>
<dbReference type="ProteomicsDB" id="62745">
    <molecule id="Q5DID0-3"/>
</dbReference>
<dbReference type="ProteomicsDB" id="62746">
    <molecule id="Q5DID0-4"/>
</dbReference>
<dbReference type="Antibodypedia" id="42290">
    <property type="antibodies" value="41 antibodies from 10 providers"/>
</dbReference>
<dbReference type="DNASU" id="89766"/>
<dbReference type="Ensembl" id="ENST00000400424.6">
    <molecule id="Q5DID0-3"/>
    <property type="protein sequence ID" value="ENSP00000383276.1"/>
    <property type="gene ID" value="ENSG00000177398.19"/>
</dbReference>
<dbReference type="Ensembl" id="ENST00000400427.5">
    <molecule id="Q5DID0-4"/>
    <property type="protein sequence ID" value="ENSP00000383279.1"/>
    <property type="gene ID" value="ENSG00000177398.19"/>
</dbReference>
<dbReference type="Ensembl" id="ENST00000408910.7">
    <molecule id="Q5DID0-1"/>
    <property type="protein sequence ID" value="ENSP00000386147.2"/>
    <property type="gene ID" value="ENSG00000177398.19"/>
</dbReference>
<dbReference type="Ensembl" id="ENST00000408989.6">
    <molecule id="Q5DID0-2"/>
    <property type="protein sequence ID" value="ENSP00000386126.2"/>
    <property type="gene ID" value="ENSG00000177398.19"/>
</dbReference>
<dbReference type="GeneID" id="89766"/>
<dbReference type="KEGG" id="hsa:89766"/>
<dbReference type="MANE-Select" id="ENST00000408910.7">
    <property type="protein sequence ID" value="ENSP00000386147.2"/>
    <property type="RefSeq nucleotide sequence ID" value="NM_001004416.3"/>
    <property type="RefSeq protein sequence ID" value="NP_001004416.3"/>
</dbReference>
<dbReference type="UCSC" id="uc002zad.2">
    <molecule id="Q5DID0-1"/>
    <property type="organism name" value="human"/>
</dbReference>
<dbReference type="AGR" id="HGNC:12560"/>
<dbReference type="CTD" id="89766"/>
<dbReference type="DisGeNET" id="89766"/>
<dbReference type="GeneCards" id="UMODL1"/>
<dbReference type="HGNC" id="HGNC:12560">
    <property type="gene designation" value="UMODL1"/>
</dbReference>
<dbReference type="HPA" id="ENSG00000177398">
    <property type="expression patterns" value="Tissue enhanced (fallopian)"/>
</dbReference>
<dbReference type="MIM" id="613859">
    <property type="type" value="gene"/>
</dbReference>
<dbReference type="neXtProt" id="NX_Q5DID0"/>
<dbReference type="OpenTargets" id="ENSG00000177398"/>
<dbReference type="PharmGKB" id="PA37200"/>
<dbReference type="VEuPathDB" id="HostDB:ENSG00000177398"/>
<dbReference type="eggNOG" id="ENOG502QVDQ">
    <property type="taxonomic scope" value="Eukaryota"/>
</dbReference>
<dbReference type="GeneTree" id="ENSGT00940000159975"/>
<dbReference type="HOGENOM" id="CLU_005456_0_0_1"/>
<dbReference type="InParanoid" id="Q5DID0"/>
<dbReference type="OMA" id="NSFEMSW"/>
<dbReference type="OrthoDB" id="10040649at2759"/>
<dbReference type="PAN-GO" id="Q5DID0">
    <property type="GO annotations" value="5 GO annotations based on evolutionary models"/>
</dbReference>
<dbReference type="PhylomeDB" id="Q5DID0"/>
<dbReference type="TreeFam" id="TF329882"/>
<dbReference type="PathwayCommons" id="Q5DID0"/>
<dbReference type="BioGRID-ORCS" id="89766">
    <property type="hits" value="9 hits in 1139 CRISPR screens"/>
</dbReference>
<dbReference type="ChiTaRS" id="UMODL1">
    <property type="organism name" value="human"/>
</dbReference>
<dbReference type="GenomeRNAi" id="89766"/>
<dbReference type="Pharos" id="Q5DID0">
    <property type="development level" value="Tbio"/>
</dbReference>
<dbReference type="PRO" id="PR:Q5DID0"/>
<dbReference type="Proteomes" id="UP000005640">
    <property type="component" value="Chromosome 21"/>
</dbReference>
<dbReference type="RNAct" id="Q5DID0">
    <property type="molecule type" value="protein"/>
</dbReference>
<dbReference type="Bgee" id="ENSG00000177398">
    <property type="expression patterns" value="Expressed in right uterine tube and 93 other cell types or tissues"/>
</dbReference>
<dbReference type="ExpressionAtlas" id="Q5DID0">
    <property type="expression patterns" value="baseline and differential"/>
</dbReference>
<dbReference type="GO" id="GO:0009986">
    <property type="term" value="C:cell surface"/>
    <property type="evidence" value="ECO:0000318"/>
    <property type="project" value="GO_Central"/>
</dbReference>
<dbReference type="GO" id="GO:0005737">
    <property type="term" value="C:cytoplasm"/>
    <property type="evidence" value="ECO:0007669"/>
    <property type="project" value="UniProtKB-SubCell"/>
</dbReference>
<dbReference type="GO" id="GO:0009897">
    <property type="term" value="C:external side of plasma membrane"/>
    <property type="evidence" value="ECO:0007669"/>
    <property type="project" value="Ensembl"/>
</dbReference>
<dbReference type="GO" id="GO:0005615">
    <property type="term" value="C:extracellular space"/>
    <property type="evidence" value="ECO:0000318"/>
    <property type="project" value="GO_Central"/>
</dbReference>
<dbReference type="GO" id="GO:0005509">
    <property type="term" value="F:calcium ion binding"/>
    <property type="evidence" value="ECO:0007669"/>
    <property type="project" value="InterPro"/>
</dbReference>
<dbReference type="GO" id="GO:0030414">
    <property type="term" value="F:peptidase inhibitor activity"/>
    <property type="evidence" value="ECO:0007669"/>
    <property type="project" value="InterPro"/>
</dbReference>
<dbReference type="GO" id="GO:0060612">
    <property type="term" value="P:adipose tissue development"/>
    <property type="evidence" value="ECO:0007669"/>
    <property type="project" value="Ensembl"/>
</dbReference>
<dbReference type="GO" id="GO:0097211">
    <property type="term" value="P:cellular response to gonadotropin-releasing hormone"/>
    <property type="evidence" value="ECO:0007669"/>
    <property type="project" value="Ensembl"/>
</dbReference>
<dbReference type="GO" id="GO:0010468">
    <property type="term" value="P:regulation of gene expression"/>
    <property type="evidence" value="ECO:0007669"/>
    <property type="project" value="Ensembl"/>
</dbReference>
<dbReference type="GO" id="GO:1904708">
    <property type="term" value="P:regulation of granulosa cell apoptotic process"/>
    <property type="evidence" value="ECO:0007669"/>
    <property type="project" value="Ensembl"/>
</dbReference>
<dbReference type="GO" id="GO:2000354">
    <property type="term" value="P:regulation of ovarian follicle development"/>
    <property type="evidence" value="ECO:0007669"/>
    <property type="project" value="Ensembl"/>
</dbReference>
<dbReference type="GO" id="GO:2000241">
    <property type="term" value="P:regulation of reproductive process"/>
    <property type="evidence" value="ECO:0007669"/>
    <property type="project" value="Ensembl"/>
</dbReference>
<dbReference type="GO" id="GO:0007338">
    <property type="term" value="P:single fertilization"/>
    <property type="evidence" value="ECO:0007669"/>
    <property type="project" value="Ensembl"/>
</dbReference>
<dbReference type="CDD" id="cd00054">
    <property type="entry name" value="EGF_CA"/>
    <property type="match status" value="3"/>
</dbReference>
<dbReference type="CDD" id="cd00063">
    <property type="entry name" value="FN3"/>
    <property type="match status" value="1"/>
</dbReference>
<dbReference type="CDD" id="cd00199">
    <property type="entry name" value="WAP"/>
    <property type="match status" value="1"/>
</dbReference>
<dbReference type="FunFam" id="2.10.25.10:FF:000038">
    <property type="entry name" value="Fibrillin 2"/>
    <property type="match status" value="1"/>
</dbReference>
<dbReference type="Gene3D" id="4.10.75.10">
    <property type="entry name" value="Elafin-like"/>
    <property type="match status" value="1"/>
</dbReference>
<dbReference type="Gene3D" id="2.60.40.10">
    <property type="entry name" value="Immunoglobulins"/>
    <property type="match status" value="1"/>
</dbReference>
<dbReference type="Gene3D" id="2.10.25.10">
    <property type="entry name" value="Laminin"/>
    <property type="match status" value="3"/>
</dbReference>
<dbReference type="Gene3D" id="2.60.40.4100">
    <property type="entry name" value="Zona pellucida, ZP-C domain"/>
    <property type="match status" value="1"/>
</dbReference>
<dbReference type="Gene3D" id="2.60.40.3210">
    <property type="entry name" value="Zona pellucida, ZP-N domain"/>
    <property type="match status" value="1"/>
</dbReference>
<dbReference type="InterPro" id="IPR001881">
    <property type="entry name" value="EGF-like_Ca-bd_dom"/>
</dbReference>
<dbReference type="InterPro" id="IPR000742">
    <property type="entry name" value="EGF-like_dom"/>
</dbReference>
<dbReference type="InterPro" id="IPR000152">
    <property type="entry name" value="EGF-type_Asp/Asn_hydroxyl_site"/>
</dbReference>
<dbReference type="InterPro" id="IPR018097">
    <property type="entry name" value="EGF_Ca-bd_CS"/>
</dbReference>
<dbReference type="InterPro" id="IPR036645">
    <property type="entry name" value="Elafin-like_sf"/>
</dbReference>
<dbReference type="InterPro" id="IPR011489">
    <property type="entry name" value="EMI_domain"/>
</dbReference>
<dbReference type="InterPro" id="IPR003961">
    <property type="entry name" value="FN3_dom"/>
</dbReference>
<dbReference type="InterPro" id="IPR036116">
    <property type="entry name" value="FN3_sf"/>
</dbReference>
<dbReference type="InterPro" id="IPR009030">
    <property type="entry name" value="Growth_fac_rcpt_cys_sf"/>
</dbReference>
<dbReference type="InterPro" id="IPR013783">
    <property type="entry name" value="Ig-like_fold"/>
</dbReference>
<dbReference type="InterPro" id="IPR049883">
    <property type="entry name" value="NOTCH1_EGF-like"/>
</dbReference>
<dbReference type="InterPro" id="IPR000082">
    <property type="entry name" value="SEA_dom"/>
</dbReference>
<dbReference type="InterPro" id="IPR008197">
    <property type="entry name" value="WAP_dom"/>
</dbReference>
<dbReference type="InterPro" id="IPR055355">
    <property type="entry name" value="ZP-C"/>
</dbReference>
<dbReference type="InterPro" id="IPR042235">
    <property type="entry name" value="ZP-C_dom"/>
</dbReference>
<dbReference type="InterPro" id="IPR055356">
    <property type="entry name" value="ZP-N"/>
</dbReference>
<dbReference type="InterPro" id="IPR048290">
    <property type="entry name" value="ZP_chr"/>
</dbReference>
<dbReference type="InterPro" id="IPR001507">
    <property type="entry name" value="ZP_dom"/>
</dbReference>
<dbReference type="PANTHER" id="PTHR14002">
    <property type="entry name" value="ENDOGLIN/TGF-BETA RECEPTOR TYPE III"/>
    <property type="match status" value="1"/>
</dbReference>
<dbReference type="PANTHER" id="PTHR14002:SF22">
    <property type="entry name" value="UROMODULIN-LIKE 1"/>
    <property type="match status" value="1"/>
</dbReference>
<dbReference type="Pfam" id="PF07645">
    <property type="entry name" value="EGF_CA"/>
    <property type="match status" value="3"/>
</dbReference>
<dbReference type="Pfam" id="PF01390">
    <property type="entry name" value="SEA"/>
    <property type="match status" value="1"/>
</dbReference>
<dbReference type="Pfam" id="PF00095">
    <property type="entry name" value="WAP"/>
    <property type="match status" value="1"/>
</dbReference>
<dbReference type="Pfam" id="PF00100">
    <property type="entry name" value="Zona_pellucida"/>
    <property type="match status" value="1"/>
</dbReference>
<dbReference type="Pfam" id="PF23344">
    <property type="entry name" value="ZP-N"/>
    <property type="match status" value="1"/>
</dbReference>
<dbReference type="PRINTS" id="PR00023">
    <property type="entry name" value="ZPELLUCIDA"/>
</dbReference>
<dbReference type="SMART" id="SM00179">
    <property type="entry name" value="EGF_CA"/>
    <property type="match status" value="3"/>
</dbReference>
<dbReference type="SMART" id="SM00060">
    <property type="entry name" value="FN3"/>
    <property type="match status" value="2"/>
</dbReference>
<dbReference type="SMART" id="SM00217">
    <property type="entry name" value="WAP"/>
    <property type="match status" value="1"/>
</dbReference>
<dbReference type="SMART" id="SM00241">
    <property type="entry name" value="ZP"/>
    <property type="match status" value="1"/>
</dbReference>
<dbReference type="SUPFAM" id="SSF57196">
    <property type="entry name" value="EGF/Laminin"/>
    <property type="match status" value="1"/>
</dbReference>
<dbReference type="SUPFAM" id="SSF57256">
    <property type="entry name" value="Elafin-like"/>
    <property type="match status" value="1"/>
</dbReference>
<dbReference type="SUPFAM" id="SSF49265">
    <property type="entry name" value="Fibronectin type III"/>
    <property type="match status" value="1"/>
</dbReference>
<dbReference type="SUPFAM" id="SSF57184">
    <property type="entry name" value="Growth factor receptor domain"/>
    <property type="match status" value="1"/>
</dbReference>
<dbReference type="PROSITE" id="PS00010">
    <property type="entry name" value="ASX_HYDROXYL"/>
    <property type="match status" value="3"/>
</dbReference>
<dbReference type="PROSITE" id="PS50026">
    <property type="entry name" value="EGF_3"/>
    <property type="match status" value="2"/>
</dbReference>
<dbReference type="PROSITE" id="PS01187">
    <property type="entry name" value="EGF_CA"/>
    <property type="match status" value="3"/>
</dbReference>
<dbReference type="PROSITE" id="PS51041">
    <property type="entry name" value="EMI"/>
    <property type="match status" value="1"/>
</dbReference>
<dbReference type="PROSITE" id="PS50853">
    <property type="entry name" value="FN3"/>
    <property type="match status" value="2"/>
</dbReference>
<dbReference type="PROSITE" id="PS50024">
    <property type="entry name" value="SEA"/>
    <property type="match status" value="2"/>
</dbReference>
<dbReference type="PROSITE" id="PS51390">
    <property type="entry name" value="WAP"/>
    <property type="match status" value="1"/>
</dbReference>
<dbReference type="PROSITE" id="PS51034">
    <property type="entry name" value="ZP_2"/>
    <property type="match status" value="1"/>
</dbReference>